<keyword id="KW-0472">Membrane</keyword>
<keyword id="KW-0496">Mitochondrion</keyword>
<keyword id="KW-0999">Mitochondrion inner membrane</keyword>
<keyword id="KW-1185">Reference proteome</keyword>
<keyword id="KW-0677">Repeat</keyword>
<keyword id="KW-0812">Transmembrane</keyword>
<keyword id="KW-1133">Transmembrane helix</keyword>
<keyword id="KW-0813">Transport</keyword>
<reference key="1">
    <citation type="submission" date="2001-06" db="EMBL/GenBank/DDBJ databases">
        <title>Isolation of full-length cDNA clones from macaque brain cDNA libraries.</title>
        <authorList>
            <person name="Osada N."/>
            <person name="Hida M."/>
            <person name="Kusuda J."/>
            <person name="Tanuma R."/>
            <person name="Iseki K."/>
            <person name="Hirai M."/>
            <person name="Terao K."/>
            <person name="Suzuki Y."/>
            <person name="Sugano S."/>
            <person name="Hashimoto K."/>
        </authorList>
    </citation>
    <scope>NUCLEOTIDE SEQUENCE [LARGE SCALE MRNA]</scope>
    <source>
        <tissue>Medulla oblongata</tissue>
        <tissue>Temporal cortex</tissue>
    </source>
</reference>
<sequence length="315" mass="35416">MTGQGHSASGSSAWSTVFRHVRYENLVAGVSGGVLSNLALHPLDLVKIRFAVSDGLELRPKYNGILHCLTTIWKLDGLRGLYQGVTPNVWGAGLSWGLYFFFYNAIKSYKTEGRAERLEATEYLVSAAEAGAMTLCITNPLWVTKTRLMLQYDAVINSPHRQYKGMFDTLVKIYKYEGVRGLYKGFVPGLFGTSHGALQFMAYELLKLKYNQHINRLPEAQLSTVEYISVAALSKIFAVAATYPYQVVRARLQDQHMFYSGVIDVITKTWRKEGIGGFYKGIAPNLIRVTPACCITFVVYENVSHFLLDLREKRK</sequence>
<gene>
    <name evidence="2" type="primary">SLC25A32</name>
    <name type="synonym">MFTC</name>
    <name type="ORF">QmoA-10785</name>
    <name type="ORF">QtrA-13024</name>
</gene>
<accession>Q95J75</accession>
<dbReference type="EMBL" id="AB060884">
    <property type="protein sequence ID" value="BAB46890.1"/>
    <property type="molecule type" value="mRNA"/>
</dbReference>
<dbReference type="EMBL" id="AB062992">
    <property type="protein sequence ID" value="BAB60754.1"/>
    <property type="molecule type" value="mRNA"/>
</dbReference>
<dbReference type="RefSeq" id="XP_005563951.1">
    <property type="nucleotide sequence ID" value="XM_005563894.4"/>
</dbReference>
<dbReference type="SMR" id="Q95J75"/>
<dbReference type="STRING" id="9541.ENSMFAP00000043801"/>
<dbReference type="Ensembl" id="ENSMFAT00000018118.2">
    <property type="protein sequence ID" value="ENSMFAP00000043828.2"/>
    <property type="gene ID" value="ENSMFAG00000039281.2"/>
</dbReference>
<dbReference type="GeneID" id="102144981"/>
<dbReference type="KEGG" id="mcf:102144981"/>
<dbReference type="CTD" id="81034"/>
<dbReference type="VEuPathDB" id="HostDB:ENSMFAG00000039281"/>
<dbReference type="eggNOG" id="KOG0764">
    <property type="taxonomic scope" value="Eukaryota"/>
</dbReference>
<dbReference type="GeneTree" id="ENSGT00920000149145"/>
<dbReference type="OMA" id="TTVWKHE"/>
<dbReference type="OrthoDB" id="1141at314294"/>
<dbReference type="Proteomes" id="UP000233100">
    <property type="component" value="Chromosome 8"/>
</dbReference>
<dbReference type="Bgee" id="ENSMFAG00000039281">
    <property type="expression patterns" value="Expressed in liver and 13 other cell types or tissues"/>
</dbReference>
<dbReference type="GO" id="GO:0005743">
    <property type="term" value="C:mitochondrial inner membrane"/>
    <property type="evidence" value="ECO:0000250"/>
    <property type="project" value="UniProtKB"/>
</dbReference>
<dbReference type="GO" id="GO:0015230">
    <property type="term" value="F:FAD transmembrane transporter activity"/>
    <property type="evidence" value="ECO:0000250"/>
    <property type="project" value="UniProtKB"/>
</dbReference>
<dbReference type="GO" id="GO:1904947">
    <property type="term" value="P:folate import into mitochondrion"/>
    <property type="evidence" value="ECO:0000250"/>
    <property type="project" value="UniProtKB"/>
</dbReference>
<dbReference type="GO" id="GO:1990548">
    <property type="term" value="P:mitochondrial FAD transmembrane transport"/>
    <property type="evidence" value="ECO:0000250"/>
    <property type="project" value="UniProtKB"/>
</dbReference>
<dbReference type="FunFam" id="1.50.40.10:FF:000025">
    <property type="entry name" value="mitochondrial folate transporter/carrier"/>
    <property type="match status" value="1"/>
</dbReference>
<dbReference type="Gene3D" id="1.50.40.10">
    <property type="entry name" value="Mitochondrial carrier domain"/>
    <property type="match status" value="1"/>
</dbReference>
<dbReference type="InterPro" id="IPR002067">
    <property type="entry name" value="Mit_carrier"/>
</dbReference>
<dbReference type="InterPro" id="IPR018108">
    <property type="entry name" value="Mitochondrial_sb/sol_carrier"/>
</dbReference>
<dbReference type="InterPro" id="IPR023395">
    <property type="entry name" value="Mt_carrier_dom_sf"/>
</dbReference>
<dbReference type="InterPro" id="IPR044712">
    <property type="entry name" value="SLC25A32-like"/>
</dbReference>
<dbReference type="PANTHER" id="PTHR45683">
    <property type="entry name" value="MITOCHONDRIAL NICOTINAMIDE ADENINE DINUCLEOTIDE TRANSPORTER 1-RELATED-RELATED"/>
    <property type="match status" value="1"/>
</dbReference>
<dbReference type="Pfam" id="PF00153">
    <property type="entry name" value="Mito_carr"/>
    <property type="match status" value="3"/>
</dbReference>
<dbReference type="PRINTS" id="PR00784">
    <property type="entry name" value="MTUNCOUPLING"/>
</dbReference>
<dbReference type="SUPFAM" id="SSF103506">
    <property type="entry name" value="Mitochondrial carrier"/>
    <property type="match status" value="1"/>
</dbReference>
<dbReference type="PROSITE" id="PS50920">
    <property type="entry name" value="SOLCAR"/>
    <property type="match status" value="3"/>
</dbReference>
<feature type="chain" id="PRO_0000090642" description="Solute carrier family 25 member 32">
    <location>
        <begin position="1"/>
        <end position="315"/>
    </location>
</feature>
<feature type="transmembrane region" description="Helical; Name=1" evidence="3">
    <location>
        <begin position="26"/>
        <end position="43"/>
    </location>
</feature>
<feature type="transmembrane region" description="Helical; Name=2" evidence="3">
    <location>
        <begin position="89"/>
        <end position="106"/>
    </location>
</feature>
<feature type="transmembrane region" description="Helical; Name=3" evidence="3">
    <location>
        <begin position="123"/>
        <end position="143"/>
    </location>
</feature>
<feature type="transmembrane region" description="Helical; Name=4" evidence="3">
    <location>
        <begin position="186"/>
        <end position="203"/>
    </location>
</feature>
<feature type="transmembrane region" description="Helical; Name=5" evidence="3">
    <location>
        <begin position="227"/>
        <end position="243"/>
    </location>
</feature>
<feature type="transmembrane region" description="Helical; Name=6" evidence="3">
    <location>
        <begin position="281"/>
        <end position="300"/>
    </location>
</feature>
<feature type="repeat" description="Solcar 1" evidence="4">
    <location>
        <begin position="20"/>
        <end position="109"/>
    </location>
</feature>
<feature type="repeat" description="Solcar 2" evidence="4">
    <location>
        <begin position="118"/>
        <end position="209"/>
    </location>
</feature>
<feature type="repeat" description="Solcar 3" evidence="4">
    <location>
        <begin position="222"/>
        <end position="306"/>
    </location>
</feature>
<organism>
    <name type="scientific">Macaca fascicularis</name>
    <name type="common">Crab-eating macaque</name>
    <name type="synonym">Cynomolgus monkey</name>
    <dbReference type="NCBI Taxonomy" id="9541"/>
    <lineage>
        <taxon>Eukaryota</taxon>
        <taxon>Metazoa</taxon>
        <taxon>Chordata</taxon>
        <taxon>Craniata</taxon>
        <taxon>Vertebrata</taxon>
        <taxon>Euteleostomi</taxon>
        <taxon>Mammalia</taxon>
        <taxon>Eutheria</taxon>
        <taxon>Euarchontoglires</taxon>
        <taxon>Primates</taxon>
        <taxon>Haplorrhini</taxon>
        <taxon>Catarrhini</taxon>
        <taxon>Cercopithecidae</taxon>
        <taxon>Cercopithecinae</taxon>
        <taxon>Macaca</taxon>
    </lineage>
</organism>
<comment type="function">
    <text evidence="2">Facilitates flavin adenine dinucleotide (FAD) translocation across the mitochondrial inner membrane into the mitochondrial matrix where it acts as a redox cofactor to assist flavoenzyme activities in fundamental metabolic processes including fatty acid beta-oxidation, amino acid and choline metabolism as well as mitochondrial electron transportation. In particular, provides FAD to DLD dehydrogenase of the glycine cleavage system, part of mitochondrial one-carbon metabolic pathway involved in neural tube closure in early embryogenesis.</text>
</comment>
<comment type="catalytic activity">
    <reaction evidence="2">
        <text>FAD(in) = FAD(out)</text>
        <dbReference type="Rhea" id="RHEA:76535"/>
        <dbReference type="ChEBI" id="CHEBI:57692"/>
    </reaction>
</comment>
<comment type="subcellular location">
    <subcellularLocation>
        <location evidence="1">Mitochondrion inner membrane</location>
        <topology evidence="3">Multi-pass membrane protein</topology>
    </subcellularLocation>
</comment>
<comment type="similarity">
    <text evidence="5">Belongs to the mitochondrial carrier (TC 2.A.29) family.</text>
</comment>
<protein>
    <recommendedName>
        <fullName>Solute carrier family 25 member 32</fullName>
    </recommendedName>
    <alternativeName>
        <fullName evidence="2">Mitochondrial FAD transporter</fullName>
    </alternativeName>
</protein>
<name>S2532_MACFA</name>
<evidence type="ECO:0000250" key="1">
    <source>
        <dbReference type="UniProtKB" id="Q6IZB5"/>
    </source>
</evidence>
<evidence type="ECO:0000250" key="2">
    <source>
        <dbReference type="UniProtKB" id="Q9H2D1"/>
    </source>
</evidence>
<evidence type="ECO:0000255" key="3"/>
<evidence type="ECO:0000255" key="4">
    <source>
        <dbReference type="PROSITE-ProRule" id="PRU00282"/>
    </source>
</evidence>
<evidence type="ECO:0000305" key="5"/>
<proteinExistence type="evidence at transcript level"/>